<dbReference type="EC" id="5.4.99.44"/>
<dbReference type="EMBL" id="X80674">
    <property type="protein sequence ID" value="CAA56699.1"/>
    <property type="molecule type" value="Genomic_DNA"/>
</dbReference>
<dbReference type="EMBL" id="Z72585">
    <property type="protein sequence ID" value="CAA96766.1"/>
    <property type="molecule type" value="Genomic_DNA"/>
</dbReference>
<dbReference type="EMBL" id="BK006941">
    <property type="protein sequence ID" value="DAA08039.2"/>
    <property type="molecule type" value="Genomic_DNA"/>
</dbReference>
<dbReference type="PIR" id="S64067">
    <property type="entry name" value="S64067"/>
</dbReference>
<dbReference type="RefSeq" id="NP_011452.4">
    <property type="nucleotide sequence ID" value="NM_001180928.4"/>
</dbReference>
<dbReference type="SMR" id="P53167"/>
<dbReference type="BioGRID" id="33184">
    <property type="interactions" value="75"/>
</dbReference>
<dbReference type="DIP" id="DIP-5022N"/>
<dbReference type="FunCoup" id="P53167">
    <property type="interactions" value="847"/>
</dbReference>
<dbReference type="IntAct" id="P53167">
    <property type="interactions" value="1"/>
</dbReference>
<dbReference type="MINT" id="P53167"/>
<dbReference type="STRING" id="4932.YGL063W"/>
<dbReference type="PaxDb" id="4932-YGL063W"/>
<dbReference type="PeptideAtlas" id="P53167"/>
<dbReference type="EnsemblFungi" id="YGL063W_mRNA">
    <property type="protein sequence ID" value="YGL063W"/>
    <property type="gene ID" value="YGL063W"/>
</dbReference>
<dbReference type="GeneID" id="852817"/>
<dbReference type="KEGG" id="sce:YGL063W"/>
<dbReference type="AGR" id="SGD:S000003031"/>
<dbReference type="SGD" id="S000003031">
    <property type="gene designation" value="PUS2"/>
</dbReference>
<dbReference type="VEuPathDB" id="FungiDB:YGL063W"/>
<dbReference type="eggNOG" id="KOG2553">
    <property type="taxonomic scope" value="Eukaryota"/>
</dbReference>
<dbReference type="GeneTree" id="ENSGT00950000183160"/>
<dbReference type="HOGENOM" id="CLU_021971_4_0_1"/>
<dbReference type="InParanoid" id="P53167"/>
<dbReference type="OMA" id="CDARTYT"/>
<dbReference type="OrthoDB" id="10256309at2759"/>
<dbReference type="BioCyc" id="MetaCyc:YGL063W-MONOMER"/>
<dbReference type="BioCyc" id="YEAST:YGL063W-MONOMER"/>
<dbReference type="BRENDA" id="5.4.99.44">
    <property type="organism ID" value="984"/>
</dbReference>
<dbReference type="BioGRID-ORCS" id="852817">
    <property type="hits" value="1 hit in 10 CRISPR screens"/>
</dbReference>
<dbReference type="PRO" id="PR:P53167"/>
<dbReference type="Proteomes" id="UP000002311">
    <property type="component" value="Chromosome VII"/>
</dbReference>
<dbReference type="RNAct" id="P53167">
    <property type="molecule type" value="protein"/>
</dbReference>
<dbReference type="GO" id="GO:0005739">
    <property type="term" value="C:mitochondrion"/>
    <property type="evidence" value="ECO:0000314"/>
    <property type="project" value="SGD"/>
</dbReference>
<dbReference type="GO" id="GO:0005634">
    <property type="term" value="C:nucleus"/>
    <property type="evidence" value="ECO:0000318"/>
    <property type="project" value="GO_Central"/>
</dbReference>
<dbReference type="GO" id="GO:0160153">
    <property type="term" value="F:mitochondrial tRNA pseudouridine(27/28) synthase activity"/>
    <property type="evidence" value="ECO:0007669"/>
    <property type="project" value="UniProtKB-EC"/>
</dbReference>
<dbReference type="GO" id="GO:0009982">
    <property type="term" value="F:pseudouridine synthase activity"/>
    <property type="evidence" value="ECO:0000315"/>
    <property type="project" value="SGD"/>
</dbReference>
<dbReference type="GO" id="GO:0003723">
    <property type="term" value="F:RNA binding"/>
    <property type="evidence" value="ECO:0007669"/>
    <property type="project" value="InterPro"/>
</dbReference>
<dbReference type="GO" id="GO:1990481">
    <property type="term" value="P:mRNA pseudouridine synthesis"/>
    <property type="evidence" value="ECO:0000315"/>
    <property type="project" value="SGD"/>
</dbReference>
<dbReference type="GO" id="GO:0031119">
    <property type="term" value="P:tRNA pseudouridine synthesis"/>
    <property type="evidence" value="ECO:0000315"/>
    <property type="project" value="SGD"/>
</dbReference>
<dbReference type="CDD" id="cd02568">
    <property type="entry name" value="PseudoU_synth_PUS1_PUS2"/>
    <property type="match status" value="1"/>
</dbReference>
<dbReference type="FunFam" id="3.30.70.580:FF:000028">
    <property type="entry name" value="tRNA pseudouridine synthase"/>
    <property type="match status" value="1"/>
</dbReference>
<dbReference type="FunFam" id="3.30.70.660:FF:000015">
    <property type="entry name" value="tRNA pseudouridine synthase"/>
    <property type="match status" value="1"/>
</dbReference>
<dbReference type="Gene3D" id="3.30.70.660">
    <property type="entry name" value="Pseudouridine synthase I, catalytic domain, C-terminal subdomain"/>
    <property type="match status" value="1"/>
</dbReference>
<dbReference type="Gene3D" id="3.30.70.580">
    <property type="entry name" value="Pseudouridine synthase I, catalytic domain, N-terminal subdomain"/>
    <property type="match status" value="1"/>
</dbReference>
<dbReference type="InterPro" id="IPR020103">
    <property type="entry name" value="PsdUridine_synth_cat_dom_sf"/>
</dbReference>
<dbReference type="InterPro" id="IPR001406">
    <property type="entry name" value="PsdUridine_synth_TruA"/>
</dbReference>
<dbReference type="InterPro" id="IPR020097">
    <property type="entry name" value="PsdUridine_synth_TruA_a/b_dom"/>
</dbReference>
<dbReference type="InterPro" id="IPR020095">
    <property type="entry name" value="PsdUridine_synth_TruA_C"/>
</dbReference>
<dbReference type="InterPro" id="IPR041708">
    <property type="entry name" value="PUS1/PUS2-like"/>
</dbReference>
<dbReference type="InterPro" id="IPR020094">
    <property type="entry name" value="TruA/RsuA/RluB/E/F_N"/>
</dbReference>
<dbReference type="NCBIfam" id="TIGR00071">
    <property type="entry name" value="hisT_truA"/>
    <property type="match status" value="1"/>
</dbReference>
<dbReference type="PANTHER" id="PTHR11142">
    <property type="entry name" value="PSEUDOURIDYLATE SYNTHASE"/>
    <property type="match status" value="1"/>
</dbReference>
<dbReference type="PANTHER" id="PTHR11142:SF4">
    <property type="entry name" value="PSEUDOURIDYLATE SYNTHASE 1 HOMOLOG"/>
    <property type="match status" value="1"/>
</dbReference>
<dbReference type="Pfam" id="PF01416">
    <property type="entry name" value="PseudoU_synth_1"/>
    <property type="match status" value="1"/>
</dbReference>
<dbReference type="SUPFAM" id="SSF55120">
    <property type="entry name" value="Pseudouridine synthase"/>
    <property type="match status" value="1"/>
</dbReference>
<accession>P53167</accession>
<accession>D6VU78</accession>
<accession>Q06713</accession>
<reference key="1">
    <citation type="journal article" date="1996" name="EMBO J.">
        <title>Nuclear pore proteins are involved in the biogenesis of functional tRNA.</title>
        <authorList>
            <person name="Simos G."/>
            <person name="Tekotte H."/>
            <person name="Grosjean H."/>
            <person name="Segref A."/>
            <person name="Sharma K."/>
            <person name="Tollervey D."/>
            <person name="Hurt E.C."/>
        </authorList>
    </citation>
    <scope>NUCLEOTIDE SEQUENCE [GENOMIC DNA]</scope>
</reference>
<reference key="2">
    <citation type="journal article" date="1997" name="Yeast">
        <title>The characterization of two new clusters of duplicated genes suggests a 'Lego' organization of the yeast Saccharomyces cerevisiae chromosomes.</title>
        <authorList>
            <person name="Feuermann M."/>
            <person name="de Montigny J."/>
            <person name="Potier S."/>
            <person name="Souciet J.-L."/>
        </authorList>
    </citation>
    <scope>NUCLEOTIDE SEQUENCE [GENOMIC DNA]</scope>
    <source>
        <strain>ATCC 204508 / S288c</strain>
    </source>
</reference>
<reference key="3">
    <citation type="journal article" date="1997" name="Nature">
        <title>The nucleotide sequence of Saccharomyces cerevisiae chromosome VII.</title>
        <authorList>
            <person name="Tettelin H."/>
            <person name="Agostoni-Carbone M.L."/>
            <person name="Albermann K."/>
            <person name="Albers M."/>
            <person name="Arroyo J."/>
            <person name="Backes U."/>
            <person name="Barreiros T."/>
            <person name="Bertani I."/>
            <person name="Bjourson A.J."/>
            <person name="Brueckner M."/>
            <person name="Bruschi C.V."/>
            <person name="Carignani G."/>
            <person name="Castagnoli L."/>
            <person name="Cerdan E."/>
            <person name="Clemente M.L."/>
            <person name="Coblenz A."/>
            <person name="Coglievina M."/>
            <person name="Coissac E."/>
            <person name="Defoor E."/>
            <person name="Del Bino S."/>
            <person name="Delius H."/>
            <person name="Delneri D."/>
            <person name="de Wergifosse P."/>
            <person name="Dujon B."/>
            <person name="Durand P."/>
            <person name="Entian K.-D."/>
            <person name="Eraso P."/>
            <person name="Escribano V."/>
            <person name="Fabiani L."/>
            <person name="Fartmann B."/>
            <person name="Feroli F."/>
            <person name="Feuermann M."/>
            <person name="Frontali L."/>
            <person name="Garcia-Gonzalez M."/>
            <person name="Garcia-Saez M.I."/>
            <person name="Goffeau A."/>
            <person name="Guerreiro P."/>
            <person name="Hani J."/>
            <person name="Hansen M."/>
            <person name="Hebling U."/>
            <person name="Hernandez K."/>
            <person name="Heumann K."/>
            <person name="Hilger F."/>
            <person name="Hofmann B."/>
            <person name="Indge K.J."/>
            <person name="James C.M."/>
            <person name="Klima R."/>
            <person name="Koetter P."/>
            <person name="Kramer B."/>
            <person name="Kramer W."/>
            <person name="Lauquin G."/>
            <person name="Leuther H."/>
            <person name="Louis E.J."/>
            <person name="Maillier E."/>
            <person name="Marconi A."/>
            <person name="Martegani E."/>
            <person name="Mazon M.J."/>
            <person name="Mazzoni C."/>
            <person name="McReynolds A.D.K."/>
            <person name="Melchioretto P."/>
            <person name="Mewes H.-W."/>
            <person name="Minenkova O."/>
            <person name="Mueller-Auer S."/>
            <person name="Nawrocki A."/>
            <person name="Netter P."/>
            <person name="Neu R."/>
            <person name="Nombela C."/>
            <person name="Oliver S.G."/>
            <person name="Panzeri L."/>
            <person name="Paoluzi S."/>
            <person name="Plevani P."/>
            <person name="Portetelle D."/>
            <person name="Portillo F."/>
            <person name="Potier S."/>
            <person name="Purnelle B."/>
            <person name="Rieger M."/>
            <person name="Riles L."/>
            <person name="Rinaldi T."/>
            <person name="Robben J."/>
            <person name="Rodrigues-Pousada C."/>
            <person name="Rodriguez-Belmonte E."/>
            <person name="Rodriguez-Torres A.M."/>
            <person name="Rose M."/>
            <person name="Ruzzi M."/>
            <person name="Saliola M."/>
            <person name="Sanchez-Perez M."/>
            <person name="Schaefer B."/>
            <person name="Schaefer M."/>
            <person name="Scharfe M."/>
            <person name="Schmidheini T."/>
            <person name="Schreer A."/>
            <person name="Skala J."/>
            <person name="Souciet J.-L."/>
            <person name="Steensma H.Y."/>
            <person name="Talla E."/>
            <person name="Thierry A."/>
            <person name="Vandenbol M."/>
            <person name="van der Aart Q.J.M."/>
            <person name="Van Dyck L."/>
            <person name="Vanoni M."/>
            <person name="Verhasselt P."/>
            <person name="Voet M."/>
            <person name="Volckaert G."/>
            <person name="Wambutt R."/>
            <person name="Watson M.D."/>
            <person name="Weber N."/>
            <person name="Wedler E."/>
            <person name="Wedler H."/>
            <person name="Wipfli P."/>
            <person name="Wolf K."/>
            <person name="Wright L.F."/>
            <person name="Zaccaria P."/>
            <person name="Zimmermann M."/>
            <person name="Zollner A."/>
            <person name="Kleine K."/>
        </authorList>
    </citation>
    <scope>NUCLEOTIDE SEQUENCE [LARGE SCALE GENOMIC DNA]</scope>
    <source>
        <strain>ATCC 204508 / S288c</strain>
    </source>
</reference>
<reference key="4">
    <citation type="journal article" date="2014" name="G3 (Bethesda)">
        <title>The reference genome sequence of Saccharomyces cerevisiae: Then and now.</title>
        <authorList>
            <person name="Engel S.R."/>
            <person name="Dietrich F.S."/>
            <person name="Fisk D.G."/>
            <person name="Binkley G."/>
            <person name="Balakrishnan R."/>
            <person name="Costanzo M.C."/>
            <person name="Dwight S.S."/>
            <person name="Hitz B.C."/>
            <person name="Karra K."/>
            <person name="Nash R.S."/>
            <person name="Weng S."/>
            <person name="Wong E.D."/>
            <person name="Lloyd P."/>
            <person name="Skrzypek M.S."/>
            <person name="Miyasato S.R."/>
            <person name="Simison M."/>
            <person name="Cherry J.M."/>
        </authorList>
    </citation>
    <scope>GENOME REANNOTATION</scope>
    <scope>SEQUENCE REVISION TO 136</scope>
    <source>
        <strain>ATCC 204508 / S288c</strain>
    </source>
</reference>
<reference key="5">
    <citation type="journal article" date="2007" name="RNA">
        <title>The Saccharomyces cerevisiae Pus2 protein encoded by YGL063w ORF is a mitochondrial tRNA:Psi27/28-synthase.</title>
        <authorList>
            <person name="Behm-Ansmant I."/>
            <person name="Branlant C."/>
            <person name="Motorin Y."/>
        </authorList>
    </citation>
    <scope>FUNCTION</scope>
    <scope>CATALYTIC ACTIVITY</scope>
    <scope>SUBCELLULAR LOCATION</scope>
    <scope>MUTAGENESIS OF ASP-56</scope>
</reference>
<evidence type="ECO:0000250" key="1"/>
<evidence type="ECO:0000269" key="2">
    <source>
    </source>
</evidence>
<evidence type="ECO:0000305" key="3"/>
<feature type="chain" id="PRO_0000057532" description="tRNA pseudouridine(27/28) synthase">
    <location>
        <begin position="1"/>
        <end position="370"/>
    </location>
</feature>
<feature type="active site" description="Nucleophile">
    <location>
        <position position="56"/>
    </location>
</feature>
<feature type="binding site" evidence="1">
    <location>
        <position position="111"/>
    </location>
    <ligand>
        <name>substrate</name>
    </ligand>
</feature>
<feature type="mutagenesis site" description="Abolishes catalytic activity." evidence="2">
    <original>D</original>
    <variation>A</variation>
    <location>
        <position position="56"/>
    </location>
</feature>
<feature type="sequence conflict" description="In Ref. 2 and 3; CAA96766." evidence="3" ref="2 3">
    <original>C</original>
    <variation>S</variation>
    <location>
        <position position="136"/>
    </location>
</feature>
<gene>
    <name type="primary">PUS2</name>
    <name type="ordered locus">YGL063W</name>
</gene>
<name>PUS2_YEAST</name>
<comment type="function">
    <text evidence="2">Mitochondrial-specific pseudouridine synthase catalyzing the formation of pseudouridine at positions 27 and 28 in the anticodon stem and loop of mitochondrial transfer RNAs.</text>
</comment>
<comment type="catalytic activity">
    <reaction evidence="2">
        <text>uridine(27/28) in mitochondrial tRNA = pseudouridine(27/28) in mitochondrial tRNA</text>
        <dbReference type="Rhea" id="RHEA:42560"/>
        <dbReference type="Rhea" id="RHEA-COMP:10115"/>
        <dbReference type="Rhea" id="RHEA-COMP:10116"/>
        <dbReference type="ChEBI" id="CHEBI:65314"/>
        <dbReference type="ChEBI" id="CHEBI:65315"/>
        <dbReference type="EC" id="5.4.99.44"/>
    </reaction>
</comment>
<comment type="subcellular location">
    <subcellularLocation>
        <location evidence="2">Mitochondrion</location>
    </subcellularLocation>
</comment>
<comment type="similarity">
    <text evidence="3">Belongs to the tRNA pseudouridine synthase TruA family.</text>
</comment>
<protein>
    <recommendedName>
        <fullName>tRNA pseudouridine(27/28) synthase</fullName>
        <ecNumber>5.4.99.44</ecNumber>
    </recommendedName>
    <alternativeName>
        <fullName>tRNA pseudouridine synthase 2</fullName>
    </alternativeName>
    <alternativeName>
        <fullName>tRNA pseudouridylate synthase 2</fullName>
    </alternativeName>
    <alternativeName>
        <fullName>tRNA-uridine isomerase 2</fullName>
    </alternativeName>
</protein>
<sequence length="370" mass="41891">MLLGYCGSGYYGMQYNPPHKTIEGEILTKLFDVGAISEENSLAPKKNSFMAAARTDKGVHAMLNLLSLKITLREDTVAKLNAALPPEIRVWGIQPVNKKFNARSACDSRWYQYLIPEFILIGPPRSSLLHRNVGGCYREDGSQEVWDTFLEQTRGRFSGDELCRLQDTAQKLSESDPLVQDYVGLLSGTLSGYCLSPSKLDAFEAAMQEYVGTHNFHNFTTGKLWGDPSAQRHIKKVVVSQASPGWICVRIHGQSFMLHQIRRMVALAVLAARCQLPPNIVRNYFNAGPRKYIPRAPAQGLLLEGPVFDGYNTKLRNLLYCEIRPDDITLERMCRFRERQICTAIAHEETQRHVFCHFVRQMNRLATPLI</sequence>
<organism>
    <name type="scientific">Saccharomyces cerevisiae (strain ATCC 204508 / S288c)</name>
    <name type="common">Baker's yeast</name>
    <dbReference type="NCBI Taxonomy" id="559292"/>
    <lineage>
        <taxon>Eukaryota</taxon>
        <taxon>Fungi</taxon>
        <taxon>Dikarya</taxon>
        <taxon>Ascomycota</taxon>
        <taxon>Saccharomycotina</taxon>
        <taxon>Saccharomycetes</taxon>
        <taxon>Saccharomycetales</taxon>
        <taxon>Saccharomycetaceae</taxon>
        <taxon>Saccharomyces</taxon>
    </lineage>
</organism>
<proteinExistence type="evidence at protein level"/>
<keyword id="KW-0413">Isomerase</keyword>
<keyword id="KW-0496">Mitochondrion</keyword>
<keyword id="KW-1185">Reference proteome</keyword>
<keyword id="KW-0819">tRNA processing</keyword>